<reference key="1">
    <citation type="journal article" date="2003" name="Nature">
        <title>Genome divergence in two Prochlorococcus ecotypes reflects oceanic niche differentiation.</title>
        <authorList>
            <person name="Rocap G."/>
            <person name="Larimer F.W."/>
            <person name="Lamerdin J.E."/>
            <person name="Malfatti S."/>
            <person name="Chain P."/>
            <person name="Ahlgren N.A."/>
            <person name="Arellano A."/>
            <person name="Coleman M."/>
            <person name="Hauser L."/>
            <person name="Hess W.R."/>
            <person name="Johnson Z.I."/>
            <person name="Land M.L."/>
            <person name="Lindell D."/>
            <person name="Post A.F."/>
            <person name="Regala W."/>
            <person name="Shah M."/>
            <person name="Shaw S.L."/>
            <person name="Steglich C."/>
            <person name="Sullivan M.B."/>
            <person name="Ting C.S."/>
            <person name="Tolonen A."/>
            <person name="Webb E.A."/>
            <person name="Zinser E.R."/>
            <person name="Chisholm S.W."/>
        </authorList>
    </citation>
    <scope>NUCLEOTIDE SEQUENCE [LARGE SCALE GENOMIC DNA]</scope>
    <source>
        <strain>CCMP1986 / NIES-2087 / MED4</strain>
    </source>
</reference>
<protein>
    <recommendedName>
        <fullName evidence="1">Chaperonin GroEL 1</fullName>
        <ecNumber evidence="1">5.6.1.7</ecNumber>
    </recommendedName>
    <alternativeName>
        <fullName evidence="1">60 kDa chaperonin 1</fullName>
    </alternativeName>
    <alternativeName>
        <fullName evidence="1">Chaperonin-60 1</fullName>
        <shortName evidence="1">Cpn60 1</shortName>
    </alternativeName>
</protein>
<accession>Q7V2M3</accession>
<sequence>MPKQLSFSNESREALEKGINTVANAVKVTIGPKAKNVVIERKFGSPDIVRDGSTVAKEINLDNPISNLGAKLIEQVASKTKESAGDGTTTATILTQIMVQEGLKNIAAGASPIELKKGMEKGLNFVLEKLRSKSIKINGSDIKKVATVSAGGDEDIGSIISKAMDIVTSDGVITVEESQSLETELDITEGMSFDRGYSSPYFVTDQERQICELENPKILITDQKISTLTNLVPILEEVQKSASPFLILAEDIEGEALTTLVLNKNSGVLNVSAVRAPSFGERRKAALEDIAILTGAKLISEDQSMKLEEVTLNDLGKAKKITISKDKTTIVAFDDTKDLVQERVEKLKREVEITESEYDKDKINERIAKLAGGVALIKVGAATETEMKYKKLRIEDSLNATKAAIEEGVVSGGGQTLIEISNELSNSRKEISDDLTTGIDIITNALLEPTKQIAKNAGFNGDVVIADIKRLGKGFNANNGEYENLNESGILDPTKVIRLALQDSVSIAAMIITTEVAVADIPEPEAAPGGPGADPMGGMGGMGGMGGMGGMGMPGMGGMGMPGMGGMGMPGMGGMGMPGMM</sequence>
<name>CH601_PROMP</name>
<feature type="chain" id="PRO_0000063484" description="Chaperonin GroEL 1">
    <location>
        <begin position="1"/>
        <end position="581"/>
    </location>
</feature>
<feature type="binding site" evidence="1">
    <location>
        <begin position="29"/>
        <end position="32"/>
    </location>
    <ligand>
        <name>ATP</name>
        <dbReference type="ChEBI" id="CHEBI:30616"/>
    </ligand>
</feature>
<feature type="binding site" evidence="1">
    <location>
        <begin position="86"/>
        <end position="90"/>
    </location>
    <ligand>
        <name>ATP</name>
        <dbReference type="ChEBI" id="CHEBI:30616"/>
    </ligand>
</feature>
<feature type="binding site" evidence="1">
    <location>
        <position position="413"/>
    </location>
    <ligand>
        <name>ATP</name>
        <dbReference type="ChEBI" id="CHEBI:30616"/>
    </ligand>
</feature>
<feature type="binding site" evidence="1">
    <location>
        <position position="492"/>
    </location>
    <ligand>
        <name>ATP</name>
        <dbReference type="ChEBI" id="CHEBI:30616"/>
    </ligand>
</feature>
<comment type="function">
    <text evidence="1">Together with its co-chaperonin GroES, plays an essential role in assisting protein folding. The GroEL-GroES system forms a nano-cage that allows encapsulation of the non-native substrate proteins and provides a physical environment optimized to promote and accelerate protein folding.</text>
</comment>
<comment type="catalytic activity">
    <reaction evidence="1">
        <text>ATP + H2O + a folded polypeptide = ADP + phosphate + an unfolded polypeptide.</text>
        <dbReference type="EC" id="5.6.1.7"/>
    </reaction>
</comment>
<comment type="subunit">
    <text evidence="1">Forms a cylinder of 14 subunits composed of two heptameric rings stacked back-to-back. Interacts with the co-chaperonin GroES.</text>
</comment>
<comment type="subcellular location">
    <subcellularLocation>
        <location evidence="1">Cytoplasm</location>
    </subcellularLocation>
</comment>
<comment type="similarity">
    <text evidence="1">Belongs to the chaperonin (HSP60) family.</text>
</comment>
<organism>
    <name type="scientific">Prochlorococcus marinus subsp. pastoris (strain CCMP1986 / NIES-2087 / MED4)</name>
    <dbReference type="NCBI Taxonomy" id="59919"/>
    <lineage>
        <taxon>Bacteria</taxon>
        <taxon>Bacillati</taxon>
        <taxon>Cyanobacteriota</taxon>
        <taxon>Cyanophyceae</taxon>
        <taxon>Synechococcales</taxon>
        <taxon>Prochlorococcaceae</taxon>
        <taxon>Prochlorococcus</taxon>
    </lineage>
</organism>
<proteinExistence type="inferred from homology"/>
<keyword id="KW-0067">ATP-binding</keyword>
<keyword id="KW-0143">Chaperone</keyword>
<keyword id="KW-0963">Cytoplasm</keyword>
<keyword id="KW-0413">Isomerase</keyword>
<keyword id="KW-0547">Nucleotide-binding</keyword>
<evidence type="ECO:0000255" key="1">
    <source>
        <dbReference type="HAMAP-Rule" id="MF_00600"/>
    </source>
</evidence>
<dbReference type="EC" id="5.6.1.7" evidence="1"/>
<dbReference type="EMBL" id="BX548174">
    <property type="protein sequence ID" value="CAE18911.1"/>
    <property type="molecule type" value="Genomic_DNA"/>
</dbReference>
<dbReference type="SMR" id="Q7V2M3"/>
<dbReference type="STRING" id="59919.PMM0452"/>
<dbReference type="KEGG" id="pmm:PMM0452"/>
<dbReference type="eggNOG" id="COG0459">
    <property type="taxonomic scope" value="Bacteria"/>
</dbReference>
<dbReference type="HOGENOM" id="CLU_016503_3_0_3"/>
<dbReference type="OrthoDB" id="9766614at2"/>
<dbReference type="Proteomes" id="UP000001026">
    <property type="component" value="Chromosome"/>
</dbReference>
<dbReference type="GO" id="GO:0005737">
    <property type="term" value="C:cytoplasm"/>
    <property type="evidence" value="ECO:0007669"/>
    <property type="project" value="UniProtKB-SubCell"/>
</dbReference>
<dbReference type="GO" id="GO:0005524">
    <property type="term" value="F:ATP binding"/>
    <property type="evidence" value="ECO:0007669"/>
    <property type="project" value="UniProtKB-UniRule"/>
</dbReference>
<dbReference type="GO" id="GO:0140662">
    <property type="term" value="F:ATP-dependent protein folding chaperone"/>
    <property type="evidence" value="ECO:0007669"/>
    <property type="project" value="InterPro"/>
</dbReference>
<dbReference type="GO" id="GO:0016853">
    <property type="term" value="F:isomerase activity"/>
    <property type="evidence" value="ECO:0007669"/>
    <property type="project" value="UniProtKB-KW"/>
</dbReference>
<dbReference type="GO" id="GO:0051082">
    <property type="term" value="F:unfolded protein binding"/>
    <property type="evidence" value="ECO:0007669"/>
    <property type="project" value="UniProtKB-UniRule"/>
</dbReference>
<dbReference type="GO" id="GO:0042026">
    <property type="term" value="P:protein refolding"/>
    <property type="evidence" value="ECO:0007669"/>
    <property type="project" value="UniProtKB-UniRule"/>
</dbReference>
<dbReference type="CDD" id="cd03344">
    <property type="entry name" value="GroEL"/>
    <property type="match status" value="1"/>
</dbReference>
<dbReference type="FunFam" id="3.50.7.10:FF:000001">
    <property type="entry name" value="60 kDa chaperonin"/>
    <property type="match status" value="1"/>
</dbReference>
<dbReference type="Gene3D" id="3.50.7.10">
    <property type="entry name" value="GroEL"/>
    <property type="match status" value="1"/>
</dbReference>
<dbReference type="Gene3D" id="1.10.560.10">
    <property type="entry name" value="GroEL-like equatorial domain"/>
    <property type="match status" value="1"/>
</dbReference>
<dbReference type="Gene3D" id="3.30.260.10">
    <property type="entry name" value="TCP-1-like chaperonin intermediate domain"/>
    <property type="match status" value="1"/>
</dbReference>
<dbReference type="HAMAP" id="MF_00600">
    <property type="entry name" value="CH60"/>
    <property type="match status" value="1"/>
</dbReference>
<dbReference type="InterPro" id="IPR018370">
    <property type="entry name" value="Chaperonin_Cpn60_CS"/>
</dbReference>
<dbReference type="InterPro" id="IPR001844">
    <property type="entry name" value="Cpn60/GroEL"/>
</dbReference>
<dbReference type="InterPro" id="IPR002423">
    <property type="entry name" value="Cpn60/GroEL/TCP-1"/>
</dbReference>
<dbReference type="InterPro" id="IPR027409">
    <property type="entry name" value="GroEL-like_apical_dom_sf"/>
</dbReference>
<dbReference type="InterPro" id="IPR027413">
    <property type="entry name" value="GROEL-like_equatorial_sf"/>
</dbReference>
<dbReference type="InterPro" id="IPR027410">
    <property type="entry name" value="TCP-1-like_intermed_sf"/>
</dbReference>
<dbReference type="NCBIfam" id="TIGR02348">
    <property type="entry name" value="GroEL"/>
    <property type="match status" value="1"/>
</dbReference>
<dbReference type="NCBIfam" id="NF000592">
    <property type="entry name" value="PRK00013.1"/>
    <property type="match status" value="1"/>
</dbReference>
<dbReference type="NCBIfam" id="NF009487">
    <property type="entry name" value="PRK12849.1"/>
    <property type="match status" value="1"/>
</dbReference>
<dbReference type="NCBIfam" id="NF009488">
    <property type="entry name" value="PRK12850.1"/>
    <property type="match status" value="1"/>
</dbReference>
<dbReference type="NCBIfam" id="NF009489">
    <property type="entry name" value="PRK12851.1"/>
    <property type="match status" value="1"/>
</dbReference>
<dbReference type="PANTHER" id="PTHR45633">
    <property type="entry name" value="60 KDA HEAT SHOCK PROTEIN, MITOCHONDRIAL"/>
    <property type="match status" value="1"/>
</dbReference>
<dbReference type="Pfam" id="PF00118">
    <property type="entry name" value="Cpn60_TCP1"/>
    <property type="match status" value="1"/>
</dbReference>
<dbReference type="PRINTS" id="PR00298">
    <property type="entry name" value="CHAPERONIN60"/>
</dbReference>
<dbReference type="SUPFAM" id="SSF52029">
    <property type="entry name" value="GroEL apical domain-like"/>
    <property type="match status" value="1"/>
</dbReference>
<dbReference type="SUPFAM" id="SSF48592">
    <property type="entry name" value="GroEL equatorial domain-like"/>
    <property type="match status" value="1"/>
</dbReference>
<dbReference type="SUPFAM" id="SSF54849">
    <property type="entry name" value="GroEL-intermediate domain like"/>
    <property type="match status" value="1"/>
</dbReference>
<dbReference type="PROSITE" id="PS00296">
    <property type="entry name" value="CHAPERONINS_CPN60"/>
    <property type="match status" value="1"/>
</dbReference>
<gene>
    <name evidence="1" type="primary">groEL1</name>
    <name evidence="1" type="synonym">groL1</name>
    <name type="ordered locus">PMM0452</name>
</gene>